<dbReference type="EC" id="2.1.1.-"/>
<dbReference type="EMBL" id="AF176023">
    <property type="protein sequence ID" value="AAD52971.1"/>
    <property type="molecule type" value="mRNA"/>
</dbReference>
<dbReference type="RefSeq" id="NP_579846.1">
    <property type="nucleotide sequence ID" value="NM_133312.1"/>
</dbReference>
<dbReference type="SMR" id="Q9QZP2"/>
<dbReference type="FunCoup" id="Q9QZP2">
    <property type="interactions" value="2409"/>
</dbReference>
<dbReference type="STRING" id="10116.ENSRNOP00000006886"/>
<dbReference type="PhosphoSitePlus" id="Q9QZP2"/>
<dbReference type="PaxDb" id="10116-ENSRNOP00000006886"/>
<dbReference type="GeneID" id="170820"/>
<dbReference type="KEGG" id="rno:170820"/>
<dbReference type="UCSC" id="RGD:619929">
    <property type="organism name" value="rat"/>
</dbReference>
<dbReference type="AGR" id="RGD:619929"/>
<dbReference type="CTD" id="11108"/>
<dbReference type="RGD" id="619929">
    <property type="gene designation" value="Prdm4"/>
</dbReference>
<dbReference type="eggNOG" id="KOG1721">
    <property type="taxonomic scope" value="Eukaryota"/>
</dbReference>
<dbReference type="eggNOG" id="KOG2461">
    <property type="taxonomic scope" value="Eukaryota"/>
</dbReference>
<dbReference type="InParanoid" id="Q9QZP2"/>
<dbReference type="OrthoDB" id="654211at2759"/>
<dbReference type="PhylomeDB" id="Q9QZP2"/>
<dbReference type="PRO" id="PR:Q9QZP2"/>
<dbReference type="Proteomes" id="UP000002494">
    <property type="component" value="Unplaced"/>
</dbReference>
<dbReference type="GO" id="GO:0005737">
    <property type="term" value="C:cytoplasm"/>
    <property type="evidence" value="ECO:0000266"/>
    <property type="project" value="RGD"/>
</dbReference>
<dbReference type="GO" id="GO:0005829">
    <property type="term" value="C:cytosol"/>
    <property type="evidence" value="ECO:0000304"/>
    <property type="project" value="Reactome"/>
</dbReference>
<dbReference type="GO" id="GO:0035097">
    <property type="term" value="C:histone methyltransferase complex"/>
    <property type="evidence" value="ECO:0000266"/>
    <property type="project" value="RGD"/>
</dbReference>
<dbReference type="GO" id="GO:0005654">
    <property type="term" value="C:nucleoplasm"/>
    <property type="evidence" value="ECO:0000304"/>
    <property type="project" value="Reactome"/>
</dbReference>
<dbReference type="GO" id="GO:0005634">
    <property type="term" value="C:nucleus"/>
    <property type="evidence" value="ECO:0000266"/>
    <property type="project" value="RGD"/>
</dbReference>
<dbReference type="GO" id="GO:0005123">
    <property type="term" value="F:death receptor binding"/>
    <property type="evidence" value="ECO:0000353"/>
    <property type="project" value="RGD"/>
</dbReference>
<dbReference type="GO" id="GO:0001228">
    <property type="term" value="F:DNA-binding transcription activator activity, RNA polymerase II-specific"/>
    <property type="evidence" value="ECO:0000266"/>
    <property type="project" value="RGD"/>
</dbReference>
<dbReference type="GO" id="GO:0000981">
    <property type="term" value="F:DNA-binding transcription factor activity, RNA polymerase II-specific"/>
    <property type="evidence" value="ECO:0000318"/>
    <property type="project" value="GO_Central"/>
</dbReference>
<dbReference type="GO" id="GO:1990226">
    <property type="term" value="F:histone methyltransferase binding"/>
    <property type="evidence" value="ECO:0000266"/>
    <property type="project" value="RGD"/>
</dbReference>
<dbReference type="GO" id="GO:0008168">
    <property type="term" value="F:methyltransferase activity"/>
    <property type="evidence" value="ECO:0007669"/>
    <property type="project" value="UniProtKB-KW"/>
</dbReference>
<dbReference type="GO" id="GO:0000978">
    <property type="term" value="F:RNA polymerase II cis-regulatory region sequence-specific DNA binding"/>
    <property type="evidence" value="ECO:0000266"/>
    <property type="project" value="RGD"/>
</dbReference>
<dbReference type="GO" id="GO:1990837">
    <property type="term" value="F:sequence-specific double-stranded DNA binding"/>
    <property type="evidence" value="ECO:0000266"/>
    <property type="project" value="RGD"/>
</dbReference>
<dbReference type="GO" id="GO:0008270">
    <property type="term" value="F:zinc ion binding"/>
    <property type="evidence" value="ECO:0007669"/>
    <property type="project" value="UniProtKB-KW"/>
</dbReference>
<dbReference type="GO" id="GO:0071363">
    <property type="term" value="P:cellular response to growth factor stimulus"/>
    <property type="evidence" value="ECO:0000270"/>
    <property type="project" value="RGD"/>
</dbReference>
<dbReference type="GO" id="GO:0031670">
    <property type="term" value="P:cellular response to nutrient"/>
    <property type="evidence" value="ECO:0000270"/>
    <property type="project" value="RGD"/>
</dbReference>
<dbReference type="GO" id="GO:0032259">
    <property type="term" value="P:methylation"/>
    <property type="evidence" value="ECO:0007669"/>
    <property type="project" value="UniProtKB-KW"/>
</dbReference>
<dbReference type="GO" id="GO:0030308">
    <property type="term" value="P:negative regulation of cell growth"/>
    <property type="evidence" value="ECO:0000314"/>
    <property type="project" value="RGD"/>
</dbReference>
<dbReference type="GO" id="GO:0010629">
    <property type="term" value="P:negative regulation of gene expression"/>
    <property type="evidence" value="ECO:0000315"/>
    <property type="project" value="ParkinsonsUK-UCL"/>
</dbReference>
<dbReference type="GO" id="GO:0045944">
    <property type="term" value="P:positive regulation of transcription by RNA polymerase II"/>
    <property type="evidence" value="ECO:0000266"/>
    <property type="project" value="RGD"/>
</dbReference>
<dbReference type="GO" id="GO:0010468">
    <property type="term" value="P:regulation of gene expression"/>
    <property type="evidence" value="ECO:0000318"/>
    <property type="project" value="GO_Central"/>
</dbReference>
<dbReference type="GO" id="GO:2000177">
    <property type="term" value="P:regulation of neural precursor cell proliferation"/>
    <property type="evidence" value="ECO:0000315"/>
    <property type="project" value="ParkinsonsUK-UCL"/>
</dbReference>
<dbReference type="GO" id="GO:2000736">
    <property type="term" value="P:regulation of stem cell differentiation"/>
    <property type="evidence" value="ECO:0000315"/>
    <property type="project" value="ParkinsonsUK-UCL"/>
</dbReference>
<dbReference type="GO" id="GO:0006366">
    <property type="term" value="P:transcription by RNA polymerase II"/>
    <property type="evidence" value="ECO:0007669"/>
    <property type="project" value="InterPro"/>
</dbReference>
<dbReference type="CDD" id="cd19189">
    <property type="entry name" value="PR-SET_PRDM4"/>
    <property type="match status" value="1"/>
</dbReference>
<dbReference type="FunFam" id="2.170.270.10:FF:000022">
    <property type="entry name" value="PR domain zinc finger protein 4"/>
    <property type="match status" value="1"/>
</dbReference>
<dbReference type="FunFam" id="3.30.160.60:FF:000436">
    <property type="entry name" value="PR domain zinc finger protein 4"/>
    <property type="match status" value="1"/>
</dbReference>
<dbReference type="FunFam" id="3.30.160.60:FF:000723">
    <property type="entry name" value="PR domain zinc finger protein 4"/>
    <property type="match status" value="1"/>
</dbReference>
<dbReference type="FunFam" id="3.30.160.60:FF:000840">
    <property type="entry name" value="PR domain zinc finger protein 4"/>
    <property type="match status" value="1"/>
</dbReference>
<dbReference type="FunFam" id="3.30.160.60:FF:000922">
    <property type="entry name" value="PR domain zinc finger protein 4"/>
    <property type="match status" value="1"/>
</dbReference>
<dbReference type="Gene3D" id="3.30.160.60">
    <property type="entry name" value="Classic Zinc Finger"/>
    <property type="match status" value="5"/>
</dbReference>
<dbReference type="Gene3D" id="2.170.270.10">
    <property type="entry name" value="SET domain"/>
    <property type="match status" value="1"/>
</dbReference>
<dbReference type="InterPro" id="IPR017124">
    <property type="entry name" value="PRDM4"/>
</dbReference>
<dbReference type="InterPro" id="IPR044404">
    <property type="entry name" value="PRDM4_PR/SET"/>
</dbReference>
<dbReference type="InterPro" id="IPR041493">
    <property type="entry name" value="PRDM4_Znf"/>
</dbReference>
<dbReference type="InterPro" id="IPR001214">
    <property type="entry name" value="SET_dom"/>
</dbReference>
<dbReference type="InterPro" id="IPR046341">
    <property type="entry name" value="SET_dom_sf"/>
</dbReference>
<dbReference type="InterPro" id="IPR050331">
    <property type="entry name" value="Zinc_finger"/>
</dbReference>
<dbReference type="InterPro" id="IPR036236">
    <property type="entry name" value="Znf_C2H2_sf"/>
</dbReference>
<dbReference type="InterPro" id="IPR013087">
    <property type="entry name" value="Znf_C2H2_type"/>
</dbReference>
<dbReference type="PANTHER" id="PTHR16515">
    <property type="entry name" value="PR DOMAIN ZINC FINGER PROTEIN"/>
    <property type="match status" value="1"/>
</dbReference>
<dbReference type="PANTHER" id="PTHR16515:SF2">
    <property type="entry name" value="PR DOMAIN ZINC FINGER PROTEIN 4"/>
    <property type="match status" value="1"/>
</dbReference>
<dbReference type="Pfam" id="PF21549">
    <property type="entry name" value="PRDM2_PR"/>
    <property type="match status" value="1"/>
</dbReference>
<dbReference type="Pfam" id="PF00096">
    <property type="entry name" value="zf-C2H2"/>
    <property type="match status" value="3"/>
</dbReference>
<dbReference type="Pfam" id="PF18445">
    <property type="entry name" value="Zn_ribbon_PRDM4"/>
    <property type="match status" value="1"/>
</dbReference>
<dbReference type="PIRSF" id="PIRSF037161">
    <property type="entry name" value="PRDM4"/>
    <property type="match status" value="1"/>
</dbReference>
<dbReference type="SMART" id="SM00355">
    <property type="entry name" value="ZnF_C2H2"/>
    <property type="match status" value="7"/>
</dbReference>
<dbReference type="SUPFAM" id="SSF57667">
    <property type="entry name" value="beta-beta-alpha zinc fingers"/>
    <property type="match status" value="3"/>
</dbReference>
<dbReference type="PROSITE" id="PS50280">
    <property type="entry name" value="SET"/>
    <property type="match status" value="1"/>
</dbReference>
<dbReference type="PROSITE" id="PS00028">
    <property type="entry name" value="ZINC_FINGER_C2H2_1"/>
    <property type="match status" value="5"/>
</dbReference>
<dbReference type="PROSITE" id="PS50157">
    <property type="entry name" value="ZINC_FINGER_C2H2_2"/>
    <property type="match status" value="6"/>
</dbReference>
<sequence length="798" mass="87392">MNDMNLSPVGMEQLSSSSVSNALPVSGSHLGLAASPSHSAIPAPGLPVAIPNLGPSLSSLPSALSLMLPMGIGDRGVMCGLPERNYTLPPPPYPHLESSYFRTILPGILSYLADRPPPQYIHPNSINVDGNTALSITNNPSALDPYQANGNVGLELGIVSIDSRSVNTHGAQSLHPNDGHEVALDTTITMENVSRVTSPISTDGMAEELTMDGVTGEHSQIPNGSRSHEPLSVDSVSNNLTADTVGHGGVIPIHGNGLELPVVMETDHIANRVNGISDSVLSDSIHTVAMSTNSVSVALSTSHNFASLESVSLQEVGLSLEPVAVSSITQEVAMGTGHVDVSSDSLSFVPSSLQMEDSNSNKENMATLFTIWCTLCDRAYPSDCPDHGPVTFVPDTPIESRARLSLPKQLVLRQSIVGTDVGVWTAETIPVRTCFGPLIGQQSHSMEVAEWTDKAVSHVWKIYHNGVLEFCIITTDENECNWMMFVRKARNREEQNLVAYPHDGKIYFCTSQDIPPENELLFYYSRDYAQQIGVPEHPDVHLCNCGKECSSYSEFKAHLTSHIHNHLPSQGHSSSHGPSHSKERKWKCSMCPQAFISPSKLHVHFMGHMGMKPHKCDFCSKAFSDPSNLRTHLKIHTGQKNYRCTLCDKSFTQKAHLESHMVIHTGEKNLKCDYCDKLFMRRQDLKQHVLIHTQERQIKCPKCDKLFLRTNHLKKHLNSHEGRRDYVCEKCTKAYLTKYHLTRHLKACKEPASSSSAQDDEDEDGDSGEDGLPGSMTTEGCRMSSAVYSADESLSAHK</sequence>
<reference key="1">
    <citation type="journal article" date="1999" name="Proc. Natl. Acad. Sci. U.S.A.">
        <title>Identification of a zinc finger protein whose subcellular distribution is regulated by serum and nerve growth factor.</title>
        <authorList>
            <person name="Chittka A."/>
            <person name="Chao M.V."/>
        </authorList>
    </citation>
    <scope>NUCLEOTIDE SEQUENCE [MRNA]</scope>
</reference>
<protein>
    <recommendedName>
        <fullName>PR domain zinc finger protein 4</fullName>
        <ecNumber>2.1.1.-</ecNumber>
    </recommendedName>
    <alternativeName>
        <fullName>PR domain-containing protein 4</fullName>
    </alternativeName>
</protein>
<organism>
    <name type="scientific">Rattus norvegicus</name>
    <name type="common">Rat</name>
    <dbReference type="NCBI Taxonomy" id="10116"/>
    <lineage>
        <taxon>Eukaryota</taxon>
        <taxon>Metazoa</taxon>
        <taxon>Chordata</taxon>
        <taxon>Craniata</taxon>
        <taxon>Vertebrata</taxon>
        <taxon>Euteleostomi</taxon>
        <taxon>Mammalia</taxon>
        <taxon>Eutheria</taxon>
        <taxon>Euarchontoglires</taxon>
        <taxon>Glires</taxon>
        <taxon>Rodentia</taxon>
        <taxon>Myomorpha</taxon>
        <taxon>Muroidea</taxon>
        <taxon>Muridae</taxon>
        <taxon>Murinae</taxon>
        <taxon>Rattus</taxon>
    </lineage>
</organism>
<comment type="function">
    <text evidence="1">May function as a transcription factor involved in cell differentiation.</text>
</comment>
<comment type="subcellular location">
    <subcellularLocation>
        <location evidence="5">Nucleus</location>
    </subcellularLocation>
</comment>
<comment type="similarity">
    <text evidence="3">Belongs to the class V-like SAM-binding methyltransferase superfamily.</text>
</comment>
<accession>Q9QZP2</accession>
<evidence type="ECO:0000250" key="1"/>
<evidence type="ECO:0000255" key="2">
    <source>
        <dbReference type="PROSITE-ProRule" id="PRU00042"/>
    </source>
</evidence>
<evidence type="ECO:0000255" key="3">
    <source>
        <dbReference type="PROSITE-ProRule" id="PRU00190"/>
    </source>
</evidence>
<evidence type="ECO:0000256" key="4">
    <source>
        <dbReference type="SAM" id="MobiDB-lite"/>
    </source>
</evidence>
<evidence type="ECO:0000305" key="5"/>
<keyword id="KW-0238">DNA-binding</keyword>
<keyword id="KW-0479">Metal-binding</keyword>
<keyword id="KW-0489">Methyltransferase</keyword>
<keyword id="KW-0539">Nucleus</keyword>
<keyword id="KW-1185">Reference proteome</keyword>
<keyword id="KW-0677">Repeat</keyword>
<keyword id="KW-0949">S-adenosyl-L-methionine</keyword>
<keyword id="KW-0804">Transcription</keyword>
<keyword id="KW-0805">Transcription regulation</keyword>
<keyword id="KW-0808">Transferase</keyword>
<keyword id="KW-0862">Zinc</keyword>
<keyword id="KW-0863">Zinc-finger</keyword>
<name>PRDM4_RAT</name>
<gene>
    <name type="primary">Prdm4</name>
</gene>
<proteinExistence type="evidence at transcript level"/>
<feature type="chain" id="PRO_0000230793" description="PR domain zinc finger protein 4">
    <location>
        <begin position="1"/>
        <end position="798"/>
    </location>
</feature>
<feature type="domain" description="SET" evidence="3">
    <location>
        <begin position="408"/>
        <end position="525"/>
    </location>
</feature>
<feature type="zinc finger region" description="C2H2-type 1" evidence="2">
    <location>
        <begin position="586"/>
        <end position="608"/>
    </location>
</feature>
<feature type="zinc finger region" description="C2H2-type 2" evidence="2">
    <location>
        <begin position="614"/>
        <end position="636"/>
    </location>
</feature>
<feature type="zinc finger region" description="C2H2-type 3" evidence="2">
    <location>
        <begin position="642"/>
        <end position="664"/>
    </location>
</feature>
<feature type="zinc finger region" description="C2H2-type 4" evidence="2">
    <location>
        <begin position="670"/>
        <end position="692"/>
    </location>
</feature>
<feature type="zinc finger region" description="C2H2-type 5" evidence="2">
    <location>
        <begin position="698"/>
        <end position="720"/>
    </location>
</feature>
<feature type="zinc finger region" description="C2H2-type 6; degenerate" evidence="2">
    <location>
        <begin position="726"/>
        <end position="747"/>
    </location>
</feature>
<feature type="region of interest" description="Disordered" evidence="4">
    <location>
        <begin position="750"/>
        <end position="798"/>
    </location>
</feature>
<feature type="compositionally biased region" description="Acidic residues" evidence="4">
    <location>
        <begin position="758"/>
        <end position="769"/>
    </location>
</feature>